<protein>
    <recommendedName>
        <fullName evidence="1">Probable cell division protein WhiA</fullName>
    </recommendedName>
</protein>
<dbReference type="EMBL" id="CP000088">
    <property type="protein sequence ID" value="AAZ56051.1"/>
    <property type="molecule type" value="Genomic_DNA"/>
</dbReference>
<dbReference type="RefSeq" id="WP_011292441.1">
    <property type="nucleotide sequence ID" value="NC_007333.1"/>
</dbReference>
<dbReference type="SMR" id="Q47NB8"/>
<dbReference type="STRING" id="269800.Tfu_2018"/>
<dbReference type="KEGG" id="tfu:Tfu_2018"/>
<dbReference type="eggNOG" id="COG1481">
    <property type="taxonomic scope" value="Bacteria"/>
</dbReference>
<dbReference type="HOGENOM" id="CLU_053282_0_0_11"/>
<dbReference type="OrthoDB" id="5197218at2"/>
<dbReference type="GO" id="GO:0003677">
    <property type="term" value="F:DNA binding"/>
    <property type="evidence" value="ECO:0007669"/>
    <property type="project" value="UniProtKB-UniRule"/>
</dbReference>
<dbReference type="GO" id="GO:0051301">
    <property type="term" value="P:cell division"/>
    <property type="evidence" value="ECO:0007669"/>
    <property type="project" value="UniProtKB-UniRule"/>
</dbReference>
<dbReference type="GO" id="GO:0043937">
    <property type="term" value="P:regulation of sporulation"/>
    <property type="evidence" value="ECO:0007669"/>
    <property type="project" value="InterPro"/>
</dbReference>
<dbReference type="FunFam" id="3.10.28.10:FF:000001">
    <property type="entry name" value="Probable cell division protein WhiA"/>
    <property type="match status" value="1"/>
</dbReference>
<dbReference type="Gene3D" id="3.10.28.10">
    <property type="entry name" value="Homing endonucleases"/>
    <property type="match status" value="1"/>
</dbReference>
<dbReference type="HAMAP" id="MF_01420">
    <property type="entry name" value="HTH_type_WhiA"/>
    <property type="match status" value="1"/>
</dbReference>
<dbReference type="InterPro" id="IPR027434">
    <property type="entry name" value="Homing_endonucl"/>
</dbReference>
<dbReference type="InterPro" id="IPR018478">
    <property type="entry name" value="Sporu_reg_WhiA_N_dom"/>
</dbReference>
<dbReference type="InterPro" id="IPR003802">
    <property type="entry name" value="Sporulation_regulator_WhiA"/>
</dbReference>
<dbReference type="InterPro" id="IPR023054">
    <property type="entry name" value="Sporulation_regulator_WhiA_C"/>
</dbReference>
<dbReference type="InterPro" id="IPR039518">
    <property type="entry name" value="WhiA_LAGLIDADG_dom"/>
</dbReference>
<dbReference type="NCBIfam" id="TIGR00647">
    <property type="entry name" value="DNA_bind_WhiA"/>
    <property type="match status" value="1"/>
</dbReference>
<dbReference type="PANTHER" id="PTHR37307">
    <property type="entry name" value="CELL DIVISION PROTEIN WHIA-RELATED"/>
    <property type="match status" value="1"/>
</dbReference>
<dbReference type="PANTHER" id="PTHR37307:SF1">
    <property type="entry name" value="CELL DIVISION PROTEIN WHIA-RELATED"/>
    <property type="match status" value="1"/>
</dbReference>
<dbReference type="Pfam" id="PF02650">
    <property type="entry name" value="HTH_WhiA"/>
    <property type="match status" value="1"/>
</dbReference>
<dbReference type="Pfam" id="PF14527">
    <property type="entry name" value="LAGLIDADG_WhiA"/>
    <property type="match status" value="1"/>
</dbReference>
<dbReference type="Pfam" id="PF10298">
    <property type="entry name" value="WhiA_N"/>
    <property type="match status" value="1"/>
</dbReference>
<feature type="chain" id="PRO_0000376607" description="Probable cell division protein WhiA">
    <location>
        <begin position="1"/>
        <end position="326"/>
    </location>
</feature>
<feature type="DNA-binding region" description="H-T-H motif" evidence="1">
    <location>
        <begin position="275"/>
        <end position="308"/>
    </location>
</feature>
<accession>Q47NB8</accession>
<keyword id="KW-0131">Cell cycle</keyword>
<keyword id="KW-0132">Cell division</keyword>
<keyword id="KW-0238">DNA-binding</keyword>
<proteinExistence type="inferred from homology"/>
<reference key="1">
    <citation type="journal article" date="2007" name="J. Bacteriol.">
        <title>Genome sequence and analysis of the soil cellulolytic actinomycete Thermobifida fusca YX.</title>
        <authorList>
            <person name="Lykidis A."/>
            <person name="Mavromatis K."/>
            <person name="Ivanova N."/>
            <person name="Anderson I."/>
            <person name="Land M."/>
            <person name="DiBartolo G."/>
            <person name="Martinez M."/>
            <person name="Lapidus A."/>
            <person name="Lucas S."/>
            <person name="Copeland A."/>
            <person name="Richardson P."/>
            <person name="Wilson D.B."/>
            <person name="Kyrpides N."/>
        </authorList>
    </citation>
    <scope>NUCLEOTIDE SEQUENCE [LARGE SCALE GENOMIC DNA]</scope>
    <source>
        <strain>YX</strain>
    </source>
</reference>
<evidence type="ECO:0000255" key="1">
    <source>
        <dbReference type="HAMAP-Rule" id="MF_01420"/>
    </source>
</evidence>
<sequence length="326" mass="35090">MAMTGVVKDELSRLTVLKPCCRKAEVSTILRFTGGLHLVGGRIVIESELDTGVAARRLRKDIAEVFGHESEVLVLSPSGLRKGNRYVVRVIKEGESLARQTGLIDSNGRPVRGLPRHVVAGGVCDAESAWRGAFIAHGSLTEPGRSMSLEVTCPGPEAALALVGAARRLKVHAKAREVRGVDRVVVRDGDSISAMLTRLGAHQSVLAWEERRMRREVRATANRLANFDDANLRRSARAAVAAGARVQRALEILADDAPPHLVAAGKLRLKHKQASLEELGQLADPPLTKDAIAGRIRRLLAMADKRAADLGIPNTEASLTPDMLVP</sequence>
<gene>
    <name evidence="1" type="primary">whiA</name>
    <name type="ordered locus">Tfu_2018</name>
</gene>
<organism>
    <name type="scientific">Thermobifida fusca (strain YX)</name>
    <dbReference type="NCBI Taxonomy" id="269800"/>
    <lineage>
        <taxon>Bacteria</taxon>
        <taxon>Bacillati</taxon>
        <taxon>Actinomycetota</taxon>
        <taxon>Actinomycetes</taxon>
        <taxon>Streptosporangiales</taxon>
        <taxon>Nocardiopsidaceae</taxon>
        <taxon>Thermobifida</taxon>
    </lineage>
</organism>
<comment type="function">
    <text evidence="1">Involved in cell division and chromosome segregation.</text>
</comment>
<comment type="similarity">
    <text evidence="1">Belongs to the WhiA family.</text>
</comment>
<name>WHIA_THEFY</name>